<dbReference type="EC" id="6.3.1.2" evidence="2"/>
<dbReference type="EMBL" id="BA000018">
    <property type="protein sequence ID" value="BAB42404.1"/>
    <property type="molecule type" value="Genomic_DNA"/>
</dbReference>
<dbReference type="PIR" id="H89905">
    <property type="entry name" value="H89905"/>
</dbReference>
<dbReference type="RefSeq" id="WP_001126606.1">
    <property type="nucleotide sequence ID" value="NC_002745.2"/>
</dbReference>
<dbReference type="SMR" id="P99095"/>
<dbReference type="EnsemblBacteria" id="BAB42404">
    <property type="protein sequence ID" value="BAB42404"/>
    <property type="gene ID" value="BAB42404"/>
</dbReference>
<dbReference type="KEGG" id="sau:SA1150"/>
<dbReference type="HOGENOM" id="CLU_017290_1_3_9"/>
<dbReference type="GO" id="GO:0005737">
    <property type="term" value="C:cytoplasm"/>
    <property type="evidence" value="ECO:0007669"/>
    <property type="project" value="UniProtKB-SubCell"/>
</dbReference>
<dbReference type="GO" id="GO:0005524">
    <property type="term" value="F:ATP binding"/>
    <property type="evidence" value="ECO:0007669"/>
    <property type="project" value="UniProtKB-KW"/>
</dbReference>
<dbReference type="GO" id="GO:0004356">
    <property type="term" value="F:glutamine synthetase activity"/>
    <property type="evidence" value="ECO:0007669"/>
    <property type="project" value="UniProtKB-EC"/>
</dbReference>
<dbReference type="GO" id="GO:0046872">
    <property type="term" value="F:metal ion binding"/>
    <property type="evidence" value="ECO:0007669"/>
    <property type="project" value="UniProtKB-KW"/>
</dbReference>
<dbReference type="GO" id="GO:0006542">
    <property type="term" value="P:glutamine biosynthetic process"/>
    <property type="evidence" value="ECO:0007669"/>
    <property type="project" value="InterPro"/>
</dbReference>
<dbReference type="FunFam" id="3.10.20.70:FF:000005">
    <property type="entry name" value="Glutamine synthetase"/>
    <property type="match status" value="1"/>
</dbReference>
<dbReference type="FunFam" id="3.30.590.10:FF:000003">
    <property type="entry name" value="Glutamine synthetase 2"/>
    <property type="match status" value="1"/>
</dbReference>
<dbReference type="Gene3D" id="3.10.20.70">
    <property type="entry name" value="Glutamine synthetase, N-terminal domain"/>
    <property type="match status" value="1"/>
</dbReference>
<dbReference type="Gene3D" id="3.30.590.10">
    <property type="entry name" value="Glutamine synthetase/guanido kinase, catalytic domain"/>
    <property type="match status" value="1"/>
</dbReference>
<dbReference type="InterPro" id="IPR008147">
    <property type="entry name" value="Gln_synt_N"/>
</dbReference>
<dbReference type="InterPro" id="IPR036651">
    <property type="entry name" value="Gln_synt_N_sf"/>
</dbReference>
<dbReference type="InterPro" id="IPR014746">
    <property type="entry name" value="Gln_synth/guanido_kin_cat_dom"/>
</dbReference>
<dbReference type="InterPro" id="IPR008146">
    <property type="entry name" value="Gln_synth_cat_dom"/>
</dbReference>
<dbReference type="InterPro" id="IPR027303">
    <property type="entry name" value="Gln_synth_gly_rich_site"/>
</dbReference>
<dbReference type="InterPro" id="IPR004809">
    <property type="entry name" value="Gln_synth_I"/>
</dbReference>
<dbReference type="InterPro" id="IPR027302">
    <property type="entry name" value="Gln_synth_N_conserv_site"/>
</dbReference>
<dbReference type="NCBIfam" id="TIGR00653">
    <property type="entry name" value="GlnA"/>
    <property type="match status" value="1"/>
</dbReference>
<dbReference type="PANTHER" id="PTHR43785">
    <property type="entry name" value="GAMMA-GLUTAMYLPUTRESCINE SYNTHETASE"/>
    <property type="match status" value="1"/>
</dbReference>
<dbReference type="PANTHER" id="PTHR43785:SF12">
    <property type="entry name" value="TYPE-1 GLUTAMINE SYNTHETASE 2"/>
    <property type="match status" value="1"/>
</dbReference>
<dbReference type="Pfam" id="PF00120">
    <property type="entry name" value="Gln-synt_C"/>
    <property type="match status" value="1"/>
</dbReference>
<dbReference type="Pfam" id="PF03951">
    <property type="entry name" value="Gln-synt_N"/>
    <property type="match status" value="1"/>
</dbReference>
<dbReference type="SMART" id="SM01230">
    <property type="entry name" value="Gln-synt_C"/>
    <property type="match status" value="1"/>
</dbReference>
<dbReference type="SUPFAM" id="SSF54368">
    <property type="entry name" value="Glutamine synthetase, N-terminal domain"/>
    <property type="match status" value="1"/>
</dbReference>
<dbReference type="SUPFAM" id="SSF55931">
    <property type="entry name" value="Glutamine synthetase/guanido kinase"/>
    <property type="match status" value="1"/>
</dbReference>
<dbReference type="PROSITE" id="PS00180">
    <property type="entry name" value="GLNA_1"/>
    <property type="match status" value="1"/>
</dbReference>
<dbReference type="PROSITE" id="PS00181">
    <property type="entry name" value="GLNA_ATP"/>
    <property type="match status" value="1"/>
</dbReference>
<dbReference type="PROSITE" id="PS51986">
    <property type="entry name" value="GS_BETA_GRASP"/>
    <property type="match status" value="1"/>
</dbReference>
<dbReference type="PROSITE" id="PS51987">
    <property type="entry name" value="GS_CATALYTIC"/>
    <property type="match status" value="1"/>
</dbReference>
<feature type="chain" id="PRO_0000153259" description="Glutamine synthetase">
    <location>
        <begin position="1"/>
        <end position="446"/>
    </location>
</feature>
<feature type="domain" description="GS beta-grasp" evidence="5">
    <location>
        <begin position="18"/>
        <end position="103"/>
    </location>
</feature>
<feature type="domain" description="GS catalytic" evidence="6">
    <location>
        <begin position="110"/>
        <end position="446"/>
    </location>
</feature>
<feature type="binding site" evidence="2">
    <location>
        <position position="134"/>
    </location>
    <ligand>
        <name>Mg(2+)</name>
        <dbReference type="ChEBI" id="CHEBI:18420"/>
        <label>1</label>
    </ligand>
</feature>
<feature type="binding site" evidence="2">
    <location>
        <position position="136"/>
    </location>
    <ligand>
        <name>Mg(2+)</name>
        <dbReference type="ChEBI" id="CHEBI:18420"/>
        <label>2</label>
    </ligand>
</feature>
<feature type="binding site" evidence="4">
    <location>
        <position position="186"/>
    </location>
    <ligand>
        <name>ATP</name>
        <dbReference type="ChEBI" id="CHEBI:30616"/>
    </ligand>
</feature>
<feature type="binding site" evidence="2">
    <location>
        <position position="191"/>
    </location>
    <ligand>
        <name>Mg(2+)</name>
        <dbReference type="ChEBI" id="CHEBI:18420"/>
        <label>2</label>
    </ligand>
</feature>
<feature type="binding site" evidence="2">
    <location>
        <position position="198"/>
    </location>
    <ligand>
        <name>Mg(2+)</name>
        <dbReference type="ChEBI" id="CHEBI:18420"/>
        <label>2</label>
    </ligand>
</feature>
<feature type="binding site" evidence="4">
    <location>
        <begin position="242"/>
        <end position="243"/>
    </location>
    <ligand>
        <name>L-glutamate</name>
        <dbReference type="ChEBI" id="CHEBI:29985"/>
    </ligand>
</feature>
<feature type="binding site" evidence="2">
    <location>
        <position position="243"/>
    </location>
    <ligand>
        <name>L-glutamate</name>
        <dbReference type="ChEBI" id="CHEBI:29985"/>
    </ligand>
</feature>
<feature type="binding site" evidence="2">
    <location>
        <position position="247"/>
    </location>
    <ligand>
        <name>Mg(2+)</name>
        <dbReference type="ChEBI" id="CHEBI:18420"/>
        <label>1</label>
    </ligand>
</feature>
<feature type="binding site" evidence="3">
    <location>
        <position position="251"/>
    </location>
    <ligand>
        <name>ATP</name>
        <dbReference type="ChEBI" id="CHEBI:30616"/>
    </ligand>
</feature>
<feature type="binding site" evidence="1">
    <location>
        <position position="300"/>
    </location>
    <ligand>
        <name>L-glutamate</name>
        <dbReference type="ChEBI" id="CHEBI:29985"/>
    </ligand>
</feature>
<feature type="binding site" evidence="1">
    <location>
        <position position="306"/>
    </location>
    <ligand>
        <name>L-glutamate</name>
        <dbReference type="ChEBI" id="CHEBI:29985"/>
    </ligand>
</feature>
<feature type="binding site" evidence="4">
    <location>
        <position position="318"/>
    </location>
    <ligand>
        <name>ATP</name>
        <dbReference type="ChEBI" id="CHEBI:30616"/>
    </ligand>
</feature>
<feature type="binding site" evidence="4">
    <location>
        <position position="318"/>
    </location>
    <ligand>
        <name>L-glutamate</name>
        <dbReference type="ChEBI" id="CHEBI:29985"/>
    </ligand>
</feature>
<feature type="binding site" evidence="4">
    <location>
        <position position="323"/>
    </location>
    <ligand>
        <name>ATP</name>
        <dbReference type="ChEBI" id="CHEBI:30616"/>
    </ligand>
</feature>
<feature type="binding site" evidence="2">
    <location>
        <position position="335"/>
    </location>
    <ligand>
        <name>Mg(2+)</name>
        <dbReference type="ChEBI" id="CHEBI:18420"/>
        <label>1</label>
    </ligand>
</feature>
<feature type="binding site" evidence="1">
    <location>
        <position position="337"/>
    </location>
    <ligand>
        <name>L-glutamate</name>
        <dbReference type="ChEBI" id="CHEBI:29985"/>
    </ligand>
</feature>
<feature type="site" description="Important for inhibition by glutamine" evidence="2">
    <location>
        <position position="64"/>
    </location>
</feature>
<sequence length="446" mass="50855">MPKRTFTKEDIRKFAEEENVRYLRLQFTDILGTIKNVEVPVSQLEKVLDNEMMFDGSSIEGFVRIEESDMYLHPDLDTWVIFPWTAGQGKVARLICDVYKTDGTPFEGDPRANLKRVLKEMEDLGFTDFNLGPEPEFFLFKLDEKGEPTLELNDDGGYFDLAPTDLGENCRRDIVLELEDMGFDIEASHHEVAPGQHEIDFKYADAVTACDNIQTFKLVVKTIARKHNLHATFMPKPLFGVNGSGMHFNVSLFKGKENAFFDPNTEMGLTETAYQFTAGVLKNARGFTAVCNPLVNSYKRLVPGYEAPCYIAWSGKNRSPLIRVPSSRGLSTRIEVRSVDPAANPYMALAAILEAGLDGIKNKLKVPEPVNQNIYEMNREEREAVGIQDLPSTLYTALKAMRENEVIKKALGNHIYNQFINSKSIEWDYYRTQVSEWERDQYMKQY</sequence>
<protein>
    <recommendedName>
        <fullName evidence="2">Glutamine synthetase</fullName>
        <shortName evidence="2">GS</shortName>
        <ecNumber evidence="2">6.3.1.2</ecNumber>
    </recommendedName>
    <alternativeName>
        <fullName evidence="2">Glutamate--ammonia ligase</fullName>
    </alternativeName>
    <alternativeName>
        <fullName evidence="2">Glutamine synthetase I alpha</fullName>
        <shortName evidence="2">GSI alpha</shortName>
    </alternativeName>
</protein>
<name>GLN1A_STAAN</name>
<organism>
    <name type="scientific">Staphylococcus aureus (strain N315)</name>
    <dbReference type="NCBI Taxonomy" id="158879"/>
    <lineage>
        <taxon>Bacteria</taxon>
        <taxon>Bacillati</taxon>
        <taxon>Bacillota</taxon>
        <taxon>Bacilli</taxon>
        <taxon>Bacillales</taxon>
        <taxon>Staphylococcaceae</taxon>
        <taxon>Staphylococcus</taxon>
    </lineage>
</organism>
<reference key="1">
    <citation type="journal article" date="2001" name="Lancet">
        <title>Whole genome sequencing of meticillin-resistant Staphylococcus aureus.</title>
        <authorList>
            <person name="Kuroda M."/>
            <person name="Ohta T."/>
            <person name="Uchiyama I."/>
            <person name="Baba T."/>
            <person name="Yuzawa H."/>
            <person name="Kobayashi I."/>
            <person name="Cui L."/>
            <person name="Oguchi A."/>
            <person name="Aoki K."/>
            <person name="Nagai Y."/>
            <person name="Lian J.-Q."/>
            <person name="Ito T."/>
            <person name="Kanamori M."/>
            <person name="Matsumaru H."/>
            <person name="Maruyama A."/>
            <person name="Murakami H."/>
            <person name="Hosoyama A."/>
            <person name="Mizutani-Ui Y."/>
            <person name="Takahashi N.K."/>
            <person name="Sawano T."/>
            <person name="Inoue R."/>
            <person name="Kaito C."/>
            <person name="Sekimizu K."/>
            <person name="Hirakawa H."/>
            <person name="Kuhara S."/>
            <person name="Goto S."/>
            <person name="Yabuzaki J."/>
            <person name="Kanehisa M."/>
            <person name="Yamashita A."/>
            <person name="Oshima K."/>
            <person name="Furuya K."/>
            <person name="Yoshino C."/>
            <person name="Shiba T."/>
            <person name="Hattori M."/>
            <person name="Ogasawara N."/>
            <person name="Hayashi H."/>
            <person name="Hiramatsu K."/>
        </authorList>
    </citation>
    <scope>NUCLEOTIDE SEQUENCE [LARGE SCALE GENOMIC DNA]</scope>
    <source>
        <strain>N315</strain>
    </source>
</reference>
<reference key="2">
    <citation type="journal article" date="2005" name="J. Microbiol. Methods">
        <title>Correlation of proteomic and transcriptomic profiles of Staphylococcus aureus during the post-exponential phase of growth.</title>
        <authorList>
            <person name="Scherl A."/>
            <person name="Francois P."/>
            <person name="Bento M."/>
            <person name="Deshusses J.M."/>
            <person name="Charbonnier Y."/>
            <person name="Converset V."/>
            <person name="Huyghe A."/>
            <person name="Walter N."/>
            <person name="Hoogland C."/>
            <person name="Appel R.D."/>
            <person name="Sanchez J.-C."/>
            <person name="Zimmermann-Ivol C.G."/>
            <person name="Corthals G.L."/>
            <person name="Hochstrasser D.F."/>
            <person name="Schrenzel J."/>
        </authorList>
    </citation>
    <scope>IDENTIFICATION BY MASS SPECTROMETRY</scope>
    <source>
        <strain>N315</strain>
    </source>
</reference>
<reference key="3">
    <citation type="submission" date="2007-10" db="UniProtKB">
        <title>Shotgun proteomic analysis of total and membrane protein extracts of S. aureus strain N315.</title>
        <authorList>
            <person name="Vaezzadeh A.R."/>
            <person name="Deshusses J."/>
            <person name="Lescuyer P."/>
            <person name="Hochstrasser D.F."/>
        </authorList>
    </citation>
    <scope>IDENTIFICATION BY MASS SPECTROMETRY [LARGE SCALE ANALYSIS]</scope>
    <source>
        <strain>N315</strain>
    </source>
</reference>
<proteinExistence type="evidence at protein level"/>
<accession>P99095</accession>
<accession>Q99UG5</accession>
<keyword id="KW-0067">ATP-binding</keyword>
<keyword id="KW-0963">Cytoplasm</keyword>
<keyword id="KW-0436">Ligase</keyword>
<keyword id="KW-0460">Magnesium</keyword>
<keyword id="KW-0479">Metal-binding</keyword>
<keyword id="KW-0547">Nucleotide-binding</keyword>
<gene>
    <name evidence="2" type="primary">glnA</name>
    <name type="ordered locus">SA1150</name>
</gene>
<comment type="function">
    <text evidence="2">Glutamine synthetase (GS) is an unusual multitasking protein that functions as an enzyme, a transcription coregulator, and a chaperone in ammonium assimilation and in the regulation of genes involved in nitrogen metabolism. It catalyzes the ATP-dependent biosynthesis of glutamine from glutamate and ammonia. Feedback-inhibited GlnA also interacts with and regulates the activity of the transcriptional regulator TnrA. During nitrogen limitation, TnrA is in its DNA-binding active state and turns on the transcription of genes required for nitrogen assimilation. Under conditions of nitrogen excess, feedback-inhibited GlnA forms a stable complex with TnrA, which inhibits its DNA-binding activity. In contrast, feedback-inhibited GlnA acts as a chaperone to stabilize the DNA-binding activity of GlnR, which represses the transcription of nitrogen assimilation genes.</text>
</comment>
<comment type="catalytic activity">
    <reaction evidence="2">
        <text>L-glutamate + NH4(+) + ATP = L-glutamine + ADP + phosphate + H(+)</text>
        <dbReference type="Rhea" id="RHEA:16169"/>
        <dbReference type="ChEBI" id="CHEBI:15378"/>
        <dbReference type="ChEBI" id="CHEBI:28938"/>
        <dbReference type="ChEBI" id="CHEBI:29985"/>
        <dbReference type="ChEBI" id="CHEBI:30616"/>
        <dbReference type="ChEBI" id="CHEBI:43474"/>
        <dbReference type="ChEBI" id="CHEBI:58359"/>
        <dbReference type="ChEBI" id="CHEBI:456216"/>
        <dbReference type="EC" id="6.3.1.2"/>
    </reaction>
</comment>
<comment type="cofactor">
    <cofactor evidence="2">
        <name>Mg(2+)</name>
        <dbReference type="ChEBI" id="CHEBI:18420"/>
    </cofactor>
    <text evidence="2">Binds 2 Mg(2+) ions per subunit.</text>
</comment>
<comment type="activity regulation">
    <text evidence="2">Inhibited by glutamine.</text>
</comment>
<comment type="subunit">
    <text evidence="2">Oligomer of 12 subunits arranged in the form of two hexagons. In its feedback-inhibited form, interacts with TnrA in order to block its DNA-binding activity.</text>
</comment>
<comment type="subcellular location">
    <subcellularLocation>
        <location evidence="2">Cytoplasm</location>
    </subcellularLocation>
</comment>
<comment type="similarity">
    <text evidence="7">Belongs to the glutamine synthetase family.</text>
</comment>
<evidence type="ECO:0000250" key="1">
    <source>
        <dbReference type="UniProtKB" id="P0A1P6"/>
    </source>
</evidence>
<evidence type="ECO:0000250" key="2">
    <source>
        <dbReference type="UniProtKB" id="P12425"/>
    </source>
</evidence>
<evidence type="ECO:0000250" key="3">
    <source>
        <dbReference type="UniProtKB" id="P77961"/>
    </source>
</evidence>
<evidence type="ECO:0000250" key="4">
    <source>
        <dbReference type="UniProtKB" id="P9WN39"/>
    </source>
</evidence>
<evidence type="ECO:0000255" key="5">
    <source>
        <dbReference type="PROSITE-ProRule" id="PRU01330"/>
    </source>
</evidence>
<evidence type="ECO:0000255" key="6">
    <source>
        <dbReference type="PROSITE-ProRule" id="PRU01331"/>
    </source>
</evidence>
<evidence type="ECO:0000305" key="7"/>